<accession>P22233</accession>
<gene>
    <name type="primary">SODCC</name>
</gene>
<reference key="1">
    <citation type="journal article" date="1990" name="Nucleic Acids Res.">
        <title>Nucleotide sequence of cDNA for the cytosolic Cu/Zn-superoxide dismutase from spinach (Spinacia oleracea L.).</title>
        <authorList>
            <person name="Sakamoto A."/>
            <person name="Ohsuga H."/>
            <person name="Wakaura M."/>
            <person name="Mitsukawa N."/>
            <person name="Hibino T."/>
            <person name="Masumura T."/>
            <person name="Sasaki Y."/>
            <person name="Tanaka K."/>
        </authorList>
    </citation>
    <scope>NUCLEOTIDE SEQUENCE [MRNA]</scope>
    <source>
        <strain>cv. King of Denmark</strain>
        <tissue>Leaf</tissue>
    </source>
</reference>
<sequence length="152" mass="15223">MGKAVVVLSSSEGVSGTVYFAQEGDGPTTVTGNVSGLKPGLHGFHVHALGDTTNGCMSTGPHYNPNGKEHGAPEDDVRHAGDLGNITVGDDGTATFTIIDSQIPLSGPNSIVGRAVVVHAEPDDLGRGGHELSKTTGNAGGRVACGIIGLQG</sequence>
<keyword id="KW-0049">Antioxidant</keyword>
<keyword id="KW-0186">Copper</keyword>
<keyword id="KW-0963">Cytoplasm</keyword>
<keyword id="KW-1015">Disulfide bond</keyword>
<keyword id="KW-0479">Metal-binding</keyword>
<keyword id="KW-0560">Oxidoreductase</keyword>
<keyword id="KW-1185">Reference proteome</keyword>
<keyword id="KW-0862">Zinc</keyword>
<protein>
    <recommendedName>
        <fullName>Superoxide dismutase [Cu-Zn]</fullName>
        <ecNumber>1.15.1.1</ecNumber>
    </recommendedName>
</protein>
<dbReference type="EC" id="1.15.1.1"/>
<dbReference type="EMBL" id="X53872">
    <property type="protein sequence ID" value="CAA37866.1"/>
    <property type="molecule type" value="mRNA"/>
</dbReference>
<dbReference type="PIR" id="S12595">
    <property type="entry name" value="DSSPCY"/>
</dbReference>
<dbReference type="SMR" id="P22233"/>
<dbReference type="OrthoDB" id="2015551at2759"/>
<dbReference type="Proteomes" id="UP001155700">
    <property type="component" value="Unplaced"/>
</dbReference>
<dbReference type="GO" id="GO:0005737">
    <property type="term" value="C:cytoplasm"/>
    <property type="evidence" value="ECO:0007669"/>
    <property type="project" value="UniProtKB-SubCell"/>
</dbReference>
<dbReference type="GO" id="GO:0005507">
    <property type="term" value="F:copper ion binding"/>
    <property type="evidence" value="ECO:0000318"/>
    <property type="project" value="GO_Central"/>
</dbReference>
<dbReference type="GO" id="GO:0004784">
    <property type="term" value="F:superoxide dismutase activity"/>
    <property type="evidence" value="ECO:0000318"/>
    <property type="project" value="GO_Central"/>
</dbReference>
<dbReference type="GO" id="GO:0019430">
    <property type="term" value="P:removal of superoxide radicals"/>
    <property type="evidence" value="ECO:0000318"/>
    <property type="project" value="GO_Central"/>
</dbReference>
<dbReference type="CDD" id="cd00305">
    <property type="entry name" value="Cu-Zn_Superoxide_Dismutase"/>
    <property type="match status" value="1"/>
</dbReference>
<dbReference type="FunFam" id="2.60.40.200:FF:000001">
    <property type="entry name" value="Superoxide dismutase [Cu-Zn]"/>
    <property type="match status" value="1"/>
</dbReference>
<dbReference type="Gene3D" id="2.60.40.200">
    <property type="entry name" value="Superoxide dismutase, copper/zinc binding domain"/>
    <property type="match status" value="1"/>
</dbReference>
<dbReference type="InterPro" id="IPR036423">
    <property type="entry name" value="SOD-like_Cu/Zn_dom_sf"/>
</dbReference>
<dbReference type="InterPro" id="IPR024134">
    <property type="entry name" value="SOD_Cu/Zn_/chaperone"/>
</dbReference>
<dbReference type="InterPro" id="IPR018152">
    <property type="entry name" value="SOD_Cu/Zn_BS"/>
</dbReference>
<dbReference type="InterPro" id="IPR001424">
    <property type="entry name" value="SOD_Cu_Zn_dom"/>
</dbReference>
<dbReference type="PANTHER" id="PTHR10003">
    <property type="entry name" value="SUPEROXIDE DISMUTASE CU-ZN -RELATED"/>
    <property type="match status" value="1"/>
</dbReference>
<dbReference type="Pfam" id="PF00080">
    <property type="entry name" value="Sod_Cu"/>
    <property type="match status" value="1"/>
</dbReference>
<dbReference type="PRINTS" id="PR00068">
    <property type="entry name" value="CUZNDISMTASE"/>
</dbReference>
<dbReference type="SUPFAM" id="SSF49329">
    <property type="entry name" value="Cu,Zn superoxide dismutase-like"/>
    <property type="match status" value="1"/>
</dbReference>
<dbReference type="PROSITE" id="PS00087">
    <property type="entry name" value="SOD_CU_ZN_1"/>
    <property type="match status" value="1"/>
</dbReference>
<dbReference type="PROSITE" id="PS00332">
    <property type="entry name" value="SOD_CU_ZN_2"/>
    <property type="match status" value="1"/>
</dbReference>
<organism>
    <name type="scientific">Spinacia oleracea</name>
    <name type="common">Spinach</name>
    <dbReference type="NCBI Taxonomy" id="3562"/>
    <lineage>
        <taxon>Eukaryota</taxon>
        <taxon>Viridiplantae</taxon>
        <taxon>Streptophyta</taxon>
        <taxon>Embryophyta</taxon>
        <taxon>Tracheophyta</taxon>
        <taxon>Spermatophyta</taxon>
        <taxon>Magnoliopsida</taxon>
        <taxon>eudicotyledons</taxon>
        <taxon>Gunneridae</taxon>
        <taxon>Pentapetalae</taxon>
        <taxon>Caryophyllales</taxon>
        <taxon>Chenopodiaceae</taxon>
        <taxon>Chenopodioideae</taxon>
        <taxon>Anserineae</taxon>
        <taxon>Spinacia</taxon>
    </lineage>
</organism>
<comment type="function">
    <text>Destroys radicals which are normally produced within the cells and which are toxic to biological systems.</text>
</comment>
<comment type="catalytic activity">
    <reaction>
        <text>2 superoxide + 2 H(+) = H2O2 + O2</text>
        <dbReference type="Rhea" id="RHEA:20696"/>
        <dbReference type="ChEBI" id="CHEBI:15378"/>
        <dbReference type="ChEBI" id="CHEBI:15379"/>
        <dbReference type="ChEBI" id="CHEBI:16240"/>
        <dbReference type="ChEBI" id="CHEBI:18421"/>
        <dbReference type="EC" id="1.15.1.1"/>
    </reaction>
</comment>
<comment type="cofactor">
    <cofactor evidence="1">
        <name>Cu cation</name>
        <dbReference type="ChEBI" id="CHEBI:23378"/>
    </cofactor>
    <text evidence="1">Binds 1 copper ion per subunit.</text>
</comment>
<comment type="cofactor">
    <cofactor evidence="1">
        <name>Zn(2+)</name>
        <dbReference type="ChEBI" id="CHEBI:29105"/>
    </cofactor>
    <text evidence="1">Binds 1 zinc ion per subunit.</text>
</comment>
<comment type="subunit">
    <text>Homodimer.</text>
</comment>
<comment type="subcellular location">
    <subcellularLocation>
        <location>Cytoplasm</location>
    </subcellularLocation>
</comment>
<comment type="similarity">
    <text evidence="2">Belongs to the Cu-Zn superoxide dismutase family.</text>
</comment>
<feature type="chain" id="PRO_0000164157" description="Superoxide dismutase [Cu-Zn]">
    <location>
        <begin position="1"/>
        <end position="152"/>
    </location>
</feature>
<feature type="binding site" evidence="1">
    <location>
        <position position="45"/>
    </location>
    <ligand>
        <name>Cu cation</name>
        <dbReference type="ChEBI" id="CHEBI:23378"/>
        <note>catalytic</note>
    </ligand>
</feature>
<feature type="binding site" evidence="1">
    <location>
        <position position="47"/>
    </location>
    <ligand>
        <name>Cu cation</name>
        <dbReference type="ChEBI" id="CHEBI:23378"/>
        <note>catalytic</note>
    </ligand>
</feature>
<feature type="binding site" evidence="1">
    <location>
        <position position="62"/>
    </location>
    <ligand>
        <name>Cu cation</name>
        <dbReference type="ChEBI" id="CHEBI:23378"/>
        <note>catalytic</note>
    </ligand>
</feature>
<feature type="binding site" evidence="1">
    <location>
        <position position="62"/>
    </location>
    <ligand>
        <name>Zn(2+)</name>
        <dbReference type="ChEBI" id="CHEBI:29105"/>
        <note>structural</note>
    </ligand>
</feature>
<feature type="binding site" evidence="1">
    <location>
        <position position="70"/>
    </location>
    <ligand>
        <name>Zn(2+)</name>
        <dbReference type="ChEBI" id="CHEBI:29105"/>
        <note>structural</note>
    </ligand>
</feature>
<feature type="binding site" evidence="1">
    <location>
        <position position="79"/>
    </location>
    <ligand>
        <name>Zn(2+)</name>
        <dbReference type="ChEBI" id="CHEBI:29105"/>
        <note>structural</note>
    </ligand>
</feature>
<feature type="binding site" evidence="1">
    <location>
        <position position="82"/>
    </location>
    <ligand>
        <name>Zn(2+)</name>
        <dbReference type="ChEBI" id="CHEBI:29105"/>
        <note>structural</note>
    </ligand>
</feature>
<feature type="binding site" evidence="1">
    <location>
        <position position="119"/>
    </location>
    <ligand>
        <name>Cu cation</name>
        <dbReference type="ChEBI" id="CHEBI:23378"/>
        <note>catalytic</note>
    </ligand>
</feature>
<feature type="disulfide bond" evidence="1">
    <location>
        <begin position="56"/>
        <end position="145"/>
    </location>
</feature>
<evidence type="ECO:0000250" key="1"/>
<evidence type="ECO:0000305" key="2"/>
<proteinExistence type="evidence at transcript level"/>
<name>SODC_SPIOL</name>